<dbReference type="EMBL" id="AE014075">
    <property type="protein sequence ID" value="AAN79819.1"/>
    <property type="status" value="ALT_INIT"/>
    <property type="molecule type" value="Genomic_DNA"/>
</dbReference>
<dbReference type="RefSeq" id="WP_001443230.1">
    <property type="nucleotide sequence ID" value="NZ_CP051263.1"/>
</dbReference>
<dbReference type="SMR" id="Q8CW55"/>
<dbReference type="STRING" id="199310.c1348"/>
<dbReference type="KEGG" id="ecc:c1348"/>
<dbReference type="eggNOG" id="COG2063">
    <property type="taxonomic scope" value="Bacteria"/>
</dbReference>
<dbReference type="HOGENOM" id="CLU_069313_0_0_6"/>
<dbReference type="Proteomes" id="UP000001410">
    <property type="component" value="Chromosome"/>
</dbReference>
<dbReference type="GO" id="GO:0009427">
    <property type="term" value="C:bacterial-type flagellum basal body, distal rod, L ring"/>
    <property type="evidence" value="ECO:0007669"/>
    <property type="project" value="InterPro"/>
</dbReference>
<dbReference type="GO" id="GO:0009279">
    <property type="term" value="C:cell outer membrane"/>
    <property type="evidence" value="ECO:0007669"/>
    <property type="project" value="UniProtKB-SubCell"/>
</dbReference>
<dbReference type="GO" id="GO:0003774">
    <property type="term" value="F:cytoskeletal motor activity"/>
    <property type="evidence" value="ECO:0007669"/>
    <property type="project" value="InterPro"/>
</dbReference>
<dbReference type="GO" id="GO:0071973">
    <property type="term" value="P:bacterial-type flagellum-dependent cell motility"/>
    <property type="evidence" value="ECO:0007669"/>
    <property type="project" value="InterPro"/>
</dbReference>
<dbReference type="HAMAP" id="MF_00415">
    <property type="entry name" value="FlgH"/>
    <property type="match status" value="1"/>
</dbReference>
<dbReference type="InterPro" id="IPR000527">
    <property type="entry name" value="Flag_Lring"/>
</dbReference>
<dbReference type="NCBIfam" id="NF001301">
    <property type="entry name" value="PRK00249.1-1"/>
    <property type="match status" value="1"/>
</dbReference>
<dbReference type="PANTHER" id="PTHR34933">
    <property type="entry name" value="FLAGELLAR L-RING PROTEIN"/>
    <property type="match status" value="1"/>
</dbReference>
<dbReference type="PANTHER" id="PTHR34933:SF3">
    <property type="entry name" value="FLAGELLAR L-RING PROTEIN"/>
    <property type="match status" value="1"/>
</dbReference>
<dbReference type="Pfam" id="PF02107">
    <property type="entry name" value="FlgH"/>
    <property type="match status" value="1"/>
</dbReference>
<dbReference type="PRINTS" id="PR01008">
    <property type="entry name" value="FLGLRINGFLGH"/>
</dbReference>
<dbReference type="PROSITE" id="PS51257">
    <property type="entry name" value="PROKAR_LIPOPROTEIN"/>
    <property type="match status" value="1"/>
</dbReference>
<keyword id="KW-0975">Bacterial flagellum</keyword>
<keyword id="KW-0998">Cell outer membrane</keyword>
<keyword id="KW-0449">Lipoprotein</keyword>
<keyword id="KW-0472">Membrane</keyword>
<keyword id="KW-0564">Palmitate</keyword>
<keyword id="KW-1185">Reference proteome</keyword>
<keyword id="KW-0732">Signal</keyword>
<feature type="signal peptide" evidence="1">
    <location>
        <begin position="1"/>
        <end position="21"/>
    </location>
</feature>
<feature type="chain" id="PRO_0000009445" description="Flagellar L-ring protein">
    <location>
        <begin position="22"/>
        <end position="232"/>
    </location>
</feature>
<feature type="lipid moiety-binding region" description="N-palmitoyl cysteine" evidence="1">
    <location>
        <position position="22"/>
    </location>
</feature>
<feature type="lipid moiety-binding region" description="S-diacylglycerol cysteine" evidence="1">
    <location>
        <position position="22"/>
    </location>
</feature>
<comment type="function">
    <text evidence="1">Assembles around the rod to form the L-ring and probably protects the motor/basal body from shearing forces during rotation.</text>
</comment>
<comment type="subunit">
    <text evidence="1">The basal body constitutes a major portion of the flagellar organelle and consists of four rings (L,P,S, and M) mounted on a central rod.</text>
</comment>
<comment type="subcellular location">
    <subcellularLocation>
        <location evidence="1">Cell outer membrane</location>
        <topology evidence="1">Lipid-anchor</topology>
    </subcellularLocation>
    <subcellularLocation>
        <location evidence="1">Bacterial flagellum basal body</location>
    </subcellularLocation>
</comment>
<comment type="similarity">
    <text evidence="1">Belongs to the FlgH family.</text>
</comment>
<comment type="sequence caution" evidence="2">
    <conflict type="erroneous initiation">
        <sequence resource="EMBL-CDS" id="AAN79819"/>
    </conflict>
</comment>
<protein>
    <recommendedName>
        <fullName evidence="1">Flagellar L-ring protein</fullName>
    </recommendedName>
    <alternativeName>
        <fullName evidence="1">Basal body L-ring protein</fullName>
    </alternativeName>
</protein>
<proteinExistence type="inferred from homology"/>
<evidence type="ECO:0000255" key="1">
    <source>
        <dbReference type="HAMAP-Rule" id="MF_00415"/>
    </source>
</evidence>
<evidence type="ECO:0000305" key="2"/>
<organism>
    <name type="scientific">Escherichia coli O6:H1 (strain CFT073 / ATCC 700928 / UPEC)</name>
    <dbReference type="NCBI Taxonomy" id="199310"/>
    <lineage>
        <taxon>Bacteria</taxon>
        <taxon>Pseudomonadati</taxon>
        <taxon>Pseudomonadota</taxon>
        <taxon>Gammaproteobacteria</taxon>
        <taxon>Enterobacterales</taxon>
        <taxon>Enterobacteriaceae</taxon>
        <taxon>Escherichia</taxon>
    </lineage>
</organism>
<accession>Q8CW55</accession>
<sequence>MQKNAAHTYAISSLLVLSLTGCAWIPSTPLVQGATSAQPVPGPTPVANGSIFQSAQPINYGYQPLFEDRRPRNIGDTLTIVLQENVSASKSSSANASRDGKTNFGFDTVPRYLQGVFGNARADVEASGGNTFNGKGGANASNTFSGTLTVTVDQVLVNGNLHVVGEKQIAINQGTEFIRFSGVVNPRTISGSNTVPSTQVADARIEYVGNGYINEAQNMGWLQRFFLNLSPM</sequence>
<gene>
    <name evidence="1" type="primary">flgH</name>
    <name type="ordered locus">c1348</name>
</gene>
<name>FLGH_ECOL6</name>
<reference key="1">
    <citation type="journal article" date="2002" name="Proc. Natl. Acad. Sci. U.S.A.">
        <title>Extensive mosaic structure revealed by the complete genome sequence of uropathogenic Escherichia coli.</title>
        <authorList>
            <person name="Welch R.A."/>
            <person name="Burland V."/>
            <person name="Plunkett G. III"/>
            <person name="Redford P."/>
            <person name="Roesch P."/>
            <person name="Rasko D."/>
            <person name="Buckles E.L."/>
            <person name="Liou S.-R."/>
            <person name="Boutin A."/>
            <person name="Hackett J."/>
            <person name="Stroud D."/>
            <person name="Mayhew G.F."/>
            <person name="Rose D.J."/>
            <person name="Zhou S."/>
            <person name="Schwartz D.C."/>
            <person name="Perna N.T."/>
            <person name="Mobley H.L.T."/>
            <person name="Donnenberg M.S."/>
            <person name="Blattner F.R."/>
        </authorList>
    </citation>
    <scope>NUCLEOTIDE SEQUENCE [LARGE SCALE GENOMIC DNA]</scope>
    <source>
        <strain>CFT073 / ATCC 700928 / UPEC</strain>
    </source>
</reference>